<keyword id="KW-0067">ATP-binding</keyword>
<keyword id="KW-0963">Cytoplasm</keyword>
<keyword id="KW-0418">Kinase</keyword>
<keyword id="KW-0460">Magnesium</keyword>
<keyword id="KW-0479">Metal-binding</keyword>
<keyword id="KW-0547">Nucleotide-binding</keyword>
<keyword id="KW-1185">Reference proteome</keyword>
<keyword id="KW-0808">Transferase</keyword>
<feature type="chain" id="PRO_1000089993" description="Acetate kinase">
    <location>
        <begin position="1"/>
        <end position="398"/>
    </location>
</feature>
<feature type="active site" description="Proton donor/acceptor" evidence="1">
    <location>
        <position position="148"/>
    </location>
</feature>
<feature type="binding site" evidence="1">
    <location>
        <position position="10"/>
    </location>
    <ligand>
        <name>Mg(2+)</name>
        <dbReference type="ChEBI" id="CHEBI:18420"/>
    </ligand>
</feature>
<feature type="binding site" evidence="1">
    <location>
        <position position="17"/>
    </location>
    <ligand>
        <name>ATP</name>
        <dbReference type="ChEBI" id="CHEBI:30616"/>
    </ligand>
</feature>
<feature type="binding site" evidence="1">
    <location>
        <position position="91"/>
    </location>
    <ligand>
        <name>substrate</name>
    </ligand>
</feature>
<feature type="binding site" evidence="1">
    <location>
        <begin position="208"/>
        <end position="212"/>
    </location>
    <ligand>
        <name>ATP</name>
        <dbReference type="ChEBI" id="CHEBI:30616"/>
    </ligand>
</feature>
<feature type="binding site" evidence="1">
    <location>
        <begin position="283"/>
        <end position="285"/>
    </location>
    <ligand>
        <name>ATP</name>
        <dbReference type="ChEBI" id="CHEBI:30616"/>
    </ligand>
</feature>
<feature type="binding site" evidence="1">
    <location>
        <begin position="331"/>
        <end position="335"/>
    </location>
    <ligand>
        <name>ATP</name>
        <dbReference type="ChEBI" id="CHEBI:30616"/>
    </ligand>
</feature>
<feature type="binding site" evidence="1">
    <location>
        <position position="385"/>
    </location>
    <ligand>
        <name>Mg(2+)</name>
        <dbReference type="ChEBI" id="CHEBI:18420"/>
    </ligand>
</feature>
<feature type="site" description="Transition state stabilizer" evidence="1">
    <location>
        <position position="180"/>
    </location>
</feature>
<feature type="site" description="Transition state stabilizer" evidence="1">
    <location>
        <position position="241"/>
    </location>
</feature>
<proteinExistence type="inferred from homology"/>
<comment type="function">
    <text evidence="1">Catalyzes the formation of acetyl phosphate from acetate and ATP. Can also catalyze the reverse reaction.</text>
</comment>
<comment type="catalytic activity">
    <reaction evidence="1">
        <text>acetate + ATP = acetyl phosphate + ADP</text>
        <dbReference type="Rhea" id="RHEA:11352"/>
        <dbReference type="ChEBI" id="CHEBI:22191"/>
        <dbReference type="ChEBI" id="CHEBI:30089"/>
        <dbReference type="ChEBI" id="CHEBI:30616"/>
        <dbReference type="ChEBI" id="CHEBI:456216"/>
        <dbReference type="EC" id="2.7.2.1"/>
    </reaction>
</comment>
<comment type="cofactor">
    <cofactor evidence="1">
        <name>Mg(2+)</name>
        <dbReference type="ChEBI" id="CHEBI:18420"/>
    </cofactor>
    <cofactor evidence="1">
        <name>Mn(2+)</name>
        <dbReference type="ChEBI" id="CHEBI:29035"/>
    </cofactor>
    <text evidence="1">Mg(2+). Can also accept Mn(2+).</text>
</comment>
<comment type="pathway">
    <text evidence="1">Metabolic intermediate biosynthesis; acetyl-CoA biosynthesis; acetyl-CoA from acetate: step 1/2.</text>
</comment>
<comment type="subunit">
    <text evidence="1">Homodimer.</text>
</comment>
<comment type="subcellular location">
    <subcellularLocation>
        <location evidence="1">Cytoplasm</location>
    </subcellularLocation>
</comment>
<comment type="similarity">
    <text evidence="1">Belongs to the acetokinase family.</text>
</comment>
<gene>
    <name evidence="1" type="primary">ackA</name>
    <name type="ordered locus">Swoo_2886</name>
</gene>
<accession>B1KJX4</accession>
<reference key="1">
    <citation type="submission" date="2008-02" db="EMBL/GenBank/DDBJ databases">
        <title>Complete sequence of Shewanella woodyi ATCC 51908.</title>
        <authorList>
            <consortium name="US DOE Joint Genome Institute"/>
            <person name="Copeland A."/>
            <person name="Lucas S."/>
            <person name="Lapidus A."/>
            <person name="Glavina del Rio T."/>
            <person name="Dalin E."/>
            <person name="Tice H."/>
            <person name="Bruce D."/>
            <person name="Goodwin L."/>
            <person name="Pitluck S."/>
            <person name="Sims D."/>
            <person name="Brettin T."/>
            <person name="Detter J.C."/>
            <person name="Han C."/>
            <person name="Kuske C.R."/>
            <person name="Schmutz J."/>
            <person name="Larimer F."/>
            <person name="Land M."/>
            <person name="Hauser L."/>
            <person name="Kyrpides N."/>
            <person name="Lykidis A."/>
            <person name="Zhao J.-S."/>
            <person name="Richardson P."/>
        </authorList>
    </citation>
    <scope>NUCLEOTIDE SEQUENCE [LARGE SCALE GENOMIC DNA]</scope>
    <source>
        <strain>ATCC 51908 / MS32</strain>
    </source>
</reference>
<protein>
    <recommendedName>
        <fullName evidence="1">Acetate kinase</fullName>
        <ecNumber evidence="1">2.7.2.1</ecNumber>
    </recommendedName>
    <alternativeName>
        <fullName evidence="1">Acetokinase</fullName>
    </alternativeName>
</protein>
<organism>
    <name type="scientific">Shewanella woodyi (strain ATCC 51908 / MS32)</name>
    <dbReference type="NCBI Taxonomy" id="392500"/>
    <lineage>
        <taxon>Bacteria</taxon>
        <taxon>Pseudomonadati</taxon>
        <taxon>Pseudomonadota</taxon>
        <taxon>Gammaproteobacteria</taxon>
        <taxon>Alteromonadales</taxon>
        <taxon>Shewanellaceae</taxon>
        <taxon>Shewanella</taxon>
    </lineage>
</organism>
<evidence type="ECO:0000255" key="1">
    <source>
        <dbReference type="HAMAP-Rule" id="MF_00020"/>
    </source>
</evidence>
<dbReference type="EC" id="2.7.2.1" evidence="1"/>
<dbReference type="EMBL" id="CP000961">
    <property type="protein sequence ID" value="ACA87161.1"/>
    <property type="molecule type" value="Genomic_DNA"/>
</dbReference>
<dbReference type="RefSeq" id="WP_012325497.1">
    <property type="nucleotide sequence ID" value="NC_010506.1"/>
</dbReference>
<dbReference type="SMR" id="B1KJX4"/>
<dbReference type="STRING" id="392500.Swoo_2886"/>
<dbReference type="KEGG" id="swd:Swoo_2886"/>
<dbReference type="eggNOG" id="COG0282">
    <property type="taxonomic scope" value="Bacteria"/>
</dbReference>
<dbReference type="HOGENOM" id="CLU_020352_0_1_6"/>
<dbReference type="UniPathway" id="UPA00340">
    <property type="reaction ID" value="UER00458"/>
</dbReference>
<dbReference type="Proteomes" id="UP000002168">
    <property type="component" value="Chromosome"/>
</dbReference>
<dbReference type="GO" id="GO:0005829">
    <property type="term" value="C:cytosol"/>
    <property type="evidence" value="ECO:0007669"/>
    <property type="project" value="TreeGrafter"/>
</dbReference>
<dbReference type="GO" id="GO:0008776">
    <property type="term" value="F:acetate kinase activity"/>
    <property type="evidence" value="ECO:0007669"/>
    <property type="project" value="UniProtKB-UniRule"/>
</dbReference>
<dbReference type="GO" id="GO:0005524">
    <property type="term" value="F:ATP binding"/>
    <property type="evidence" value="ECO:0007669"/>
    <property type="project" value="UniProtKB-KW"/>
</dbReference>
<dbReference type="GO" id="GO:0000287">
    <property type="term" value="F:magnesium ion binding"/>
    <property type="evidence" value="ECO:0007669"/>
    <property type="project" value="UniProtKB-UniRule"/>
</dbReference>
<dbReference type="GO" id="GO:0006083">
    <property type="term" value="P:acetate metabolic process"/>
    <property type="evidence" value="ECO:0007669"/>
    <property type="project" value="TreeGrafter"/>
</dbReference>
<dbReference type="GO" id="GO:0006085">
    <property type="term" value="P:acetyl-CoA biosynthetic process"/>
    <property type="evidence" value="ECO:0007669"/>
    <property type="project" value="UniProtKB-UniRule"/>
</dbReference>
<dbReference type="CDD" id="cd24010">
    <property type="entry name" value="ASKHA_NBD_AcK_PK"/>
    <property type="match status" value="1"/>
</dbReference>
<dbReference type="FunFam" id="3.30.420.40:FF:000041">
    <property type="entry name" value="Acetate kinase"/>
    <property type="match status" value="1"/>
</dbReference>
<dbReference type="Gene3D" id="3.30.420.40">
    <property type="match status" value="2"/>
</dbReference>
<dbReference type="HAMAP" id="MF_00020">
    <property type="entry name" value="Acetate_kinase"/>
    <property type="match status" value="1"/>
</dbReference>
<dbReference type="InterPro" id="IPR004372">
    <property type="entry name" value="Ac/propionate_kinase"/>
</dbReference>
<dbReference type="InterPro" id="IPR000890">
    <property type="entry name" value="Aliphatic_acid_kin_short-chain"/>
</dbReference>
<dbReference type="InterPro" id="IPR023865">
    <property type="entry name" value="Aliphatic_acid_kinase_CS"/>
</dbReference>
<dbReference type="InterPro" id="IPR043129">
    <property type="entry name" value="ATPase_NBD"/>
</dbReference>
<dbReference type="NCBIfam" id="TIGR00016">
    <property type="entry name" value="ackA"/>
    <property type="match status" value="1"/>
</dbReference>
<dbReference type="PANTHER" id="PTHR21060">
    <property type="entry name" value="ACETATE KINASE"/>
    <property type="match status" value="1"/>
</dbReference>
<dbReference type="PANTHER" id="PTHR21060:SF21">
    <property type="entry name" value="ACETATE KINASE"/>
    <property type="match status" value="1"/>
</dbReference>
<dbReference type="Pfam" id="PF00871">
    <property type="entry name" value="Acetate_kinase"/>
    <property type="match status" value="1"/>
</dbReference>
<dbReference type="PIRSF" id="PIRSF000722">
    <property type="entry name" value="Acetate_prop_kin"/>
    <property type="match status" value="1"/>
</dbReference>
<dbReference type="PRINTS" id="PR00471">
    <property type="entry name" value="ACETATEKNASE"/>
</dbReference>
<dbReference type="SUPFAM" id="SSF53067">
    <property type="entry name" value="Actin-like ATPase domain"/>
    <property type="match status" value="2"/>
</dbReference>
<dbReference type="PROSITE" id="PS01075">
    <property type="entry name" value="ACETATE_KINASE_1"/>
    <property type="match status" value="1"/>
</dbReference>
<dbReference type="PROSITE" id="PS01076">
    <property type="entry name" value="ACETATE_KINASE_2"/>
    <property type="match status" value="1"/>
</dbReference>
<name>ACKA_SHEWM</name>
<sequence length="398" mass="43134">MSNKLVLVLNCGSSSLKFAIIDALTGDDQISGLAECFGLEDAKIKWKVNGVKHDASLGAFSSHREAVEFIVKDVLGAHPEIASQIQAIGHRVVHGGEKFTQSVIIDESVVQGIEDCAALAPLHNPAHLIGIRAAQASFPQLPQVAVFDTAFHQTMPEKAFIYALPYKLYRENSIRRYGMHGTSHLFISREAAKAMGKNIEDSNIICAHLGNGASVTAIKGGKSVDTSMGMTPLEGLVMGTRCGDIDPSIIHHLVDRLGYTLDEVNNLMNKQSGLLGISELTNDCRGIEEGYSEGHKGATLALEIFCYRLAKYIASYTVPLGRLDAVVFTGGIGENSDLIRAKVLNLLEIFNFEVDDERNKAARFGNQGQITTDNGTIAMVIPTNEEWVIAEDAVRLLK</sequence>